<dbReference type="EC" id="3.6.4.-"/>
<dbReference type="EC" id="3.4.22.-"/>
<dbReference type="EC" id="2.7.7.48"/>
<dbReference type="EMBL" id="M95497">
    <property type="protein sequence ID" value="AAA66056.1"/>
    <property type="molecule type" value="Genomic_RNA"/>
</dbReference>
<dbReference type="PIR" id="A46112">
    <property type="entry name" value="A46112"/>
</dbReference>
<dbReference type="PIR" id="S27927">
    <property type="entry name" value="S27927"/>
</dbReference>
<dbReference type="RefSeq" id="NP_042507.1">
    <property type="nucleotide sequence ID" value="NC_001632.1"/>
</dbReference>
<dbReference type="SMR" id="Q83034"/>
<dbReference type="MEROPS" id="C03.024"/>
<dbReference type="GeneID" id="1497257"/>
<dbReference type="KEGG" id="vg:1497257"/>
<dbReference type="Proteomes" id="UP000007086">
    <property type="component" value="Segment"/>
</dbReference>
<dbReference type="GO" id="GO:0033644">
    <property type="term" value="C:host cell membrane"/>
    <property type="evidence" value="ECO:0007669"/>
    <property type="project" value="UniProtKB-SubCell"/>
</dbReference>
<dbReference type="GO" id="GO:0016020">
    <property type="term" value="C:membrane"/>
    <property type="evidence" value="ECO:0007669"/>
    <property type="project" value="UniProtKB-KW"/>
</dbReference>
<dbReference type="GO" id="GO:0019028">
    <property type="term" value="C:viral capsid"/>
    <property type="evidence" value="ECO:0007669"/>
    <property type="project" value="UniProtKB-KW"/>
</dbReference>
<dbReference type="GO" id="GO:0005524">
    <property type="term" value="F:ATP binding"/>
    <property type="evidence" value="ECO:0007669"/>
    <property type="project" value="UniProtKB-KW"/>
</dbReference>
<dbReference type="GO" id="GO:0004197">
    <property type="term" value="F:cysteine-type endopeptidase activity"/>
    <property type="evidence" value="ECO:0007669"/>
    <property type="project" value="InterPro"/>
</dbReference>
<dbReference type="GO" id="GO:0003723">
    <property type="term" value="F:RNA binding"/>
    <property type="evidence" value="ECO:0007669"/>
    <property type="project" value="InterPro"/>
</dbReference>
<dbReference type="GO" id="GO:0003724">
    <property type="term" value="F:RNA helicase activity"/>
    <property type="evidence" value="ECO:0007669"/>
    <property type="project" value="InterPro"/>
</dbReference>
<dbReference type="GO" id="GO:0003968">
    <property type="term" value="F:RNA-directed RNA polymerase activity"/>
    <property type="evidence" value="ECO:0007669"/>
    <property type="project" value="UniProtKB-KW"/>
</dbReference>
<dbReference type="GO" id="GO:0005198">
    <property type="term" value="F:structural molecule activity"/>
    <property type="evidence" value="ECO:0007669"/>
    <property type="project" value="InterPro"/>
</dbReference>
<dbReference type="GO" id="GO:0006351">
    <property type="term" value="P:DNA-templated transcription"/>
    <property type="evidence" value="ECO:0007669"/>
    <property type="project" value="InterPro"/>
</dbReference>
<dbReference type="GO" id="GO:0006508">
    <property type="term" value="P:proteolysis"/>
    <property type="evidence" value="ECO:0007669"/>
    <property type="project" value="UniProtKB-KW"/>
</dbReference>
<dbReference type="GO" id="GO:0039694">
    <property type="term" value="P:viral RNA genome replication"/>
    <property type="evidence" value="ECO:0007669"/>
    <property type="project" value="InterPro"/>
</dbReference>
<dbReference type="CDD" id="cd23169">
    <property type="entry name" value="ps-ssRNAv-Picornavirales"/>
    <property type="match status" value="1"/>
</dbReference>
<dbReference type="CDD" id="cd00205">
    <property type="entry name" value="rhv_like"/>
    <property type="match status" value="1"/>
</dbReference>
<dbReference type="Gene3D" id="1.20.960.20">
    <property type="match status" value="1"/>
</dbReference>
<dbReference type="Gene3D" id="2.60.120.20">
    <property type="match status" value="3"/>
</dbReference>
<dbReference type="Gene3D" id="3.30.70.270">
    <property type="match status" value="1"/>
</dbReference>
<dbReference type="Gene3D" id="2.40.10.10">
    <property type="entry name" value="Trypsin-like serine proteases"/>
    <property type="match status" value="1"/>
</dbReference>
<dbReference type="InterPro" id="IPR043502">
    <property type="entry name" value="DNA/RNA_pol_sf"/>
</dbReference>
<dbReference type="InterPro" id="IPR000605">
    <property type="entry name" value="Helicase_SF3_ssDNA/RNA_vir"/>
</dbReference>
<dbReference type="InterPro" id="IPR014759">
    <property type="entry name" value="Helicase_SF3_ssRNA_vir"/>
</dbReference>
<dbReference type="InterPro" id="IPR044067">
    <property type="entry name" value="PCV_3C_PRO"/>
</dbReference>
<dbReference type="InterPro" id="IPR024387">
    <property type="entry name" value="Pept_C3G_Picornavir"/>
</dbReference>
<dbReference type="InterPro" id="IPR009003">
    <property type="entry name" value="Peptidase_S1_PA"/>
</dbReference>
<dbReference type="InterPro" id="IPR043504">
    <property type="entry name" value="Peptidase_S1_PA_chymotrypsin"/>
</dbReference>
<dbReference type="InterPro" id="IPR001676">
    <property type="entry name" value="Picornavirus_capsid"/>
</dbReference>
<dbReference type="InterPro" id="IPR043128">
    <property type="entry name" value="Rev_trsase/Diguanyl_cyclase"/>
</dbReference>
<dbReference type="InterPro" id="IPR033703">
    <property type="entry name" value="Rhv-like"/>
</dbReference>
<dbReference type="InterPro" id="IPR001205">
    <property type="entry name" value="RNA-dir_pol_C"/>
</dbReference>
<dbReference type="InterPro" id="IPR007094">
    <property type="entry name" value="RNA-dir_pol_PSvirus"/>
</dbReference>
<dbReference type="InterPro" id="IPR029053">
    <property type="entry name" value="Viral_coat"/>
</dbReference>
<dbReference type="InterPro" id="IPR024379">
    <property type="entry name" value="Waikavirus_capsid-1"/>
</dbReference>
<dbReference type="Pfam" id="PF12381">
    <property type="entry name" value="Peptidase_C3G"/>
    <property type="match status" value="1"/>
</dbReference>
<dbReference type="Pfam" id="PF00680">
    <property type="entry name" value="RdRP_1"/>
    <property type="match status" value="1"/>
</dbReference>
<dbReference type="Pfam" id="PF00073">
    <property type="entry name" value="Rhv"/>
    <property type="match status" value="1"/>
</dbReference>
<dbReference type="Pfam" id="PF00910">
    <property type="entry name" value="RNA_helicase"/>
    <property type="match status" value="1"/>
</dbReference>
<dbReference type="Pfam" id="PF12264">
    <property type="entry name" value="Waikav_capsid_1"/>
    <property type="match status" value="1"/>
</dbReference>
<dbReference type="SUPFAM" id="SSF56672">
    <property type="entry name" value="DNA/RNA polymerases"/>
    <property type="match status" value="1"/>
</dbReference>
<dbReference type="SUPFAM" id="SSF88633">
    <property type="entry name" value="Positive stranded ssRNA viruses"/>
    <property type="match status" value="2"/>
</dbReference>
<dbReference type="SUPFAM" id="SSF50494">
    <property type="entry name" value="Trypsin-like serine proteases"/>
    <property type="match status" value="1"/>
</dbReference>
<dbReference type="PROSITE" id="PS51874">
    <property type="entry name" value="PCV_3C_PRO"/>
    <property type="match status" value="1"/>
</dbReference>
<dbReference type="PROSITE" id="PS50507">
    <property type="entry name" value="RDRP_SSRNA_POS"/>
    <property type="match status" value="1"/>
</dbReference>
<dbReference type="PROSITE" id="PS51218">
    <property type="entry name" value="SF3_HELICASE_2"/>
    <property type="match status" value="1"/>
</dbReference>
<feature type="chain" id="PRO_0000041140" description="Putative leader protein" evidence="2">
    <location>
        <begin position="1"/>
        <end position="644"/>
    </location>
</feature>
<feature type="chain" id="PRO_0000041141" description="Capsid protein 1">
    <location>
        <begin position="645"/>
        <end position="852"/>
    </location>
</feature>
<feature type="chain" id="PRO_0000041142" description="Capsid protein 2">
    <location>
        <begin position="853"/>
        <end position="1055"/>
    </location>
</feature>
<feature type="chain" id="PRO_0000041143" description="Capsid protein 3">
    <location>
        <begin position="1056"/>
        <end position="1366" status="uncertain"/>
    </location>
</feature>
<feature type="chain" id="PRO_0000041144" description="Putative helicase" evidence="2">
    <location>
        <begin position="1367" status="uncertain"/>
        <end position="2526"/>
    </location>
</feature>
<feature type="chain" id="PRO_0000041145" description="Probable picornain 3C-like protease" evidence="9">
    <location>
        <begin position="2527"/>
        <end position="2852"/>
    </location>
</feature>
<feature type="chain" id="PRO_0000041146" description="Probable RNA-directed RNA polymerase" evidence="1">
    <location>
        <begin position="2853"/>
        <end position="3473"/>
    </location>
</feature>
<feature type="transmembrane region" description="Helical" evidence="2">
    <location>
        <begin position="1496"/>
        <end position="1516"/>
    </location>
</feature>
<feature type="transmembrane region" description="Helical" evidence="2">
    <location>
        <begin position="1595"/>
        <end position="1615"/>
    </location>
</feature>
<feature type="transmembrane region" description="Helical" evidence="2">
    <location>
        <begin position="2363"/>
        <end position="2383"/>
    </location>
</feature>
<feature type="domain" description="SF3 helicase" evidence="4">
    <location>
        <begin position="1751"/>
        <end position="1917"/>
    </location>
</feature>
<feature type="domain" description="Peptidase C3" evidence="5">
    <location>
        <begin position="2632"/>
        <end position="2850"/>
    </location>
</feature>
<feature type="domain" description="RdRp catalytic" evidence="3">
    <location>
        <begin position="3155"/>
        <end position="3286"/>
    </location>
</feature>
<feature type="region of interest" description="Disordered" evidence="6">
    <location>
        <begin position="602"/>
        <end position="644"/>
    </location>
</feature>
<feature type="region of interest" description="Disordered" evidence="6">
    <location>
        <begin position="1278"/>
        <end position="1306"/>
    </location>
</feature>
<feature type="region of interest" description="Disordered" evidence="6">
    <location>
        <begin position="2394"/>
        <end position="2415"/>
    </location>
</feature>
<feature type="region of interest" description="Disordered" evidence="6">
    <location>
        <begin position="2438"/>
        <end position="2465"/>
    </location>
</feature>
<feature type="coiled-coil region" evidence="2">
    <location>
        <begin position="514"/>
        <end position="604"/>
    </location>
</feature>
<feature type="compositionally biased region" description="Polar residues" evidence="6">
    <location>
        <begin position="607"/>
        <end position="622"/>
    </location>
</feature>
<feature type="compositionally biased region" description="Polar residues" evidence="6">
    <location>
        <begin position="1278"/>
        <end position="1295"/>
    </location>
</feature>
<feature type="compositionally biased region" description="Acidic residues" evidence="6">
    <location>
        <begin position="2394"/>
        <end position="2404"/>
    </location>
</feature>
<feature type="compositionally biased region" description="Basic and acidic residues" evidence="6">
    <location>
        <begin position="2438"/>
        <end position="2451"/>
    </location>
</feature>
<feature type="active site" description="For picornain 3C-like protease activity" evidence="5">
    <location>
        <position position="2680"/>
    </location>
</feature>
<feature type="active site" description="For picornain 3C-like protease activity" evidence="5">
    <location>
        <position position="2717"/>
    </location>
</feature>
<feature type="active site" description="For picornain 3C-like protease activity" evidence="5">
    <location>
        <position position="2811"/>
    </location>
</feature>
<feature type="binding site" evidence="4">
    <location>
        <begin position="1777"/>
        <end position="1784"/>
    </location>
    <ligand>
        <name>ATP</name>
        <dbReference type="ChEBI" id="CHEBI:30616"/>
    </ligand>
</feature>
<feature type="site" description="Cleavage">
    <location>
        <begin position="644"/>
        <end position="645"/>
    </location>
</feature>
<feature type="site" description="Cleavage">
    <location>
        <begin position="852"/>
        <end position="853"/>
    </location>
</feature>
<feature type="site" description="Cleavage">
    <location>
        <begin position="1055"/>
        <end position="1056"/>
    </location>
</feature>
<feature type="site" description="Cleavage" evidence="9">
    <location>
        <begin position="2526"/>
        <end position="2527"/>
    </location>
</feature>
<feature type="site" description="Cleavage" evidence="1">
    <location>
        <begin position="2852"/>
        <end position="2853"/>
    </location>
</feature>
<feature type="mutagenesis site" description="No effect on processing." evidence="8">
    <original>Q</original>
    <variation>R</variation>
    <location>
        <position position="2509"/>
    </location>
</feature>
<feature type="mutagenesis site" description="Complete loss of processing between putative helicase and picornain 3C-like protease." evidence="8">
    <original>Q</original>
    <variation>P</variation>
    <location>
        <position position="2526"/>
    </location>
</feature>
<feature type="mutagenesis site" description="Severe loss of polyprotein processing." evidence="7">
    <original>H</original>
    <variation>G</variation>
    <location>
        <position position="2680"/>
    </location>
</feature>
<feature type="mutagenesis site" description="Complete loss of polyprotein processing." evidence="7">
    <original>E</original>
    <variation>Q</variation>
    <location>
        <position position="2717"/>
    </location>
</feature>
<feature type="mutagenesis site" description="No effect on polyprotein processing." evidence="7">
    <original>D</original>
    <variation>E</variation>
    <location>
        <position position="2735"/>
    </location>
</feature>
<feature type="mutagenesis site" description="Complete loss of polyprotein processing." evidence="7">
    <original>C</original>
    <variation>A</variation>
    <location>
        <position position="2811"/>
    </location>
</feature>
<feature type="mutagenesis site" description="Complete loss of polyprotein processing." evidence="7">
    <original>H</original>
    <variation>E</variation>
    <location>
        <position position="2830"/>
    </location>
</feature>
<feature type="mutagenesis site" description="Delayed and partial processing between picornain 3C-like protease and RNA-directed RNA polymerase." evidence="8">
    <original>Q</original>
    <variation>P</variation>
    <location>
        <position position="2852"/>
    </location>
</feature>
<feature type="mutagenesis site" description="No effect on processing." evidence="8">
    <original>Q</original>
    <variation>L</variation>
    <location>
        <position position="2885"/>
    </location>
</feature>
<protein>
    <recommendedName>
        <fullName>Genome polyprotein</fullName>
    </recommendedName>
    <component>
        <recommendedName>
            <fullName>Putative leader protein</fullName>
        </recommendedName>
    </component>
    <component>
        <recommendedName>
            <fullName>Capsid protein 1</fullName>
            <shortName>CP-1</shortName>
        </recommendedName>
        <alternativeName>
            <fullName>22.5 kDa protein</fullName>
        </alternativeName>
        <alternativeName>
            <fullName>Coat protein 1</fullName>
        </alternativeName>
    </component>
    <component>
        <recommendedName>
            <fullName>Capsid protein 2</fullName>
            <shortName>CP-2</shortName>
        </recommendedName>
        <alternativeName>
            <fullName>26 kDa protein</fullName>
        </alternativeName>
        <alternativeName>
            <fullName>Coat protein 2</fullName>
        </alternativeName>
    </component>
    <component>
        <recommendedName>
            <fullName>Capsid protein 3</fullName>
            <shortName>CP-3</shortName>
        </recommendedName>
        <alternativeName>
            <fullName>31 kDa protein</fullName>
        </alternativeName>
        <alternativeName>
            <fullName>Coat protein 3</fullName>
        </alternativeName>
    </component>
    <component>
        <recommendedName>
            <fullName>Putative helicase</fullName>
            <ecNumber>3.6.4.-</ecNumber>
        </recommendedName>
        <alternativeName>
            <fullName>Putative NTP-binding protein</fullName>
        </alternativeName>
    </component>
    <component>
        <recommendedName>
            <fullName>Probable picornain 3C-like protease</fullName>
            <shortName>3C-like protease</shortName>
            <ecNumber>3.4.22.-</ecNumber>
        </recommendedName>
    </component>
    <component>
        <recommendedName>
            <fullName>Probable RNA-directed RNA polymerase</fullName>
            <ecNumber>2.7.7.48</ecNumber>
        </recommendedName>
    </component>
</protein>
<name>POLG_RTSVA</name>
<evidence type="ECO:0000250" key="1"/>
<evidence type="ECO:0000255" key="2"/>
<evidence type="ECO:0000255" key="3">
    <source>
        <dbReference type="PROSITE-ProRule" id="PRU00539"/>
    </source>
</evidence>
<evidence type="ECO:0000255" key="4">
    <source>
        <dbReference type="PROSITE-ProRule" id="PRU00551"/>
    </source>
</evidence>
<evidence type="ECO:0000255" key="5">
    <source>
        <dbReference type="PROSITE-ProRule" id="PRU01222"/>
    </source>
</evidence>
<evidence type="ECO:0000256" key="6">
    <source>
        <dbReference type="SAM" id="MobiDB-lite"/>
    </source>
</evidence>
<evidence type="ECO:0000269" key="7">
    <source>
    </source>
</evidence>
<evidence type="ECO:0000269" key="8">
    <source>
    </source>
</evidence>
<evidence type="ECO:0000305" key="9"/>
<proteinExistence type="evidence at protein level"/>
<keyword id="KW-0067">ATP-binding</keyword>
<keyword id="KW-0167">Capsid protein</keyword>
<keyword id="KW-0175">Coiled coil</keyword>
<keyword id="KW-0903">Direct protein sequencing</keyword>
<keyword id="KW-0347">Helicase</keyword>
<keyword id="KW-1043">Host membrane</keyword>
<keyword id="KW-0378">Hydrolase</keyword>
<keyword id="KW-0472">Membrane</keyword>
<keyword id="KW-0547">Nucleotide-binding</keyword>
<keyword id="KW-0548">Nucleotidyltransferase</keyword>
<keyword id="KW-0645">Protease</keyword>
<keyword id="KW-1185">Reference proteome</keyword>
<keyword id="KW-0696">RNA-directed RNA polymerase</keyword>
<keyword id="KW-0788">Thiol protease</keyword>
<keyword id="KW-0808">Transferase</keyword>
<keyword id="KW-0812">Transmembrane</keyword>
<keyword id="KW-1133">Transmembrane helix</keyword>
<keyword id="KW-0693">Viral RNA replication</keyword>
<keyword id="KW-0946">Virion</keyword>
<comment type="function">
    <text evidence="1">Picornain 3C-like protease is a thiol protease that probably cleaves the polyprotein.</text>
</comment>
<comment type="catalytic activity">
    <reaction evidence="3">
        <text>RNA(n) + a ribonucleoside 5'-triphosphate = RNA(n+1) + diphosphate</text>
        <dbReference type="Rhea" id="RHEA:21248"/>
        <dbReference type="Rhea" id="RHEA-COMP:14527"/>
        <dbReference type="Rhea" id="RHEA-COMP:17342"/>
        <dbReference type="ChEBI" id="CHEBI:33019"/>
        <dbReference type="ChEBI" id="CHEBI:61557"/>
        <dbReference type="ChEBI" id="CHEBI:140395"/>
        <dbReference type="EC" id="2.7.7.48"/>
    </reaction>
</comment>
<comment type="subcellular location">
    <molecule>Capsid protein 1</molecule>
    <subcellularLocation>
        <location evidence="9">Virion</location>
    </subcellularLocation>
</comment>
<comment type="subcellular location">
    <molecule>Capsid protein 2</molecule>
    <subcellularLocation>
        <location evidence="9">Virion</location>
    </subcellularLocation>
</comment>
<comment type="subcellular location">
    <molecule>Capsid protein 3</molecule>
    <subcellularLocation>
        <location evidence="9">Virion</location>
    </subcellularLocation>
</comment>
<comment type="subcellular location">
    <molecule>Putative helicase</molecule>
    <subcellularLocation>
        <location evidence="9">Host membrane</location>
        <topology evidence="9">Multi-pass membrane protein</topology>
    </subcellularLocation>
</comment>
<comment type="PTM">
    <text evidence="1">Specific enzymatic cleavages by picornain 3C-like protease in vivo yield mature proteins. Picornain 3C-like protease is autocatalytically processed (By similarity).</text>
</comment>
<reference key="1">
    <citation type="journal article" date="1993" name="Virology">
        <title>Nucleotide sequence and genomic organization of rice tungro spherical virus.</title>
        <authorList>
            <person name="Shen P."/>
            <person name="Kaniewska M."/>
            <person name="Smith C."/>
            <person name="Beachy R.N."/>
        </authorList>
    </citation>
    <scope>NUCLEOTIDE SEQUENCE [GENOMIC RNA]</scope>
    <scope>PROTEIN SEQUENCE OF 645-659; 853-867 AND 1056-1073</scope>
    <scope>PROTEOLYTIC PROCESSING OF POLYPROTEIN</scope>
</reference>
<reference key="2">
    <citation type="journal article" date="1998" name="Virology">
        <title>Rice tungro spherical virus polyprotein processing: identification of a virus-encoded protease and mutational analysis of putative cleavage sites.</title>
        <authorList>
            <person name="Thole V."/>
            <person name="Hull R."/>
        </authorList>
    </citation>
    <scope>PROTEOLYTIC PROCESSING OF POLYPROTEIN</scope>
    <scope>MUTAGENESIS OF GLN-2509; GLN-2526; GLN-2526; GLN-2852 AND GLN-2885</scope>
</reference>
<reference key="3">
    <citation type="journal article" date="2002" name="J. Gen. Virol.">
        <title>Characterization of a protein from Rice tungro spherical virus with serine proteinase-like activity.</title>
        <authorList>
            <person name="Thole V."/>
            <person name="Hull R."/>
        </authorList>
    </citation>
    <scope>CHARACTERIZATION OF PICORNAIN 3C-LIKE PROTEASE</scope>
    <scope>MUTAGENESIS OF HIS-2680; GLU-2717; ASP-2735; CYS-2811 AND HIS-2830</scope>
</reference>
<sequence length="3473" mass="390264">MQSFLLSSKNQAKLLHAGLEFVGGVRCAHQGWVSGKAVVFCNYCNFAHRLYRFYTKNHCVLNKELLKISVEGLLCHCIEQAFLFRRFYDRRFAWQRKYAKGFLFDNLSIPFDDCALCPNAGTRLSQTGVSHDHFVCNYVEHLFECASFSRETGGKFFRACSEGWHWNATCTTCGASCRFANPRENIVIAIFMNFLRVMYDGNKYYVSLHCDTEWIPVHPLFARLVLMVRGFAPLDNSHVIEEDEMDICGHSSEVTYEDPSKFAFTHQHVTRGVGMGHLAFCRDANGVDRGEHKFYLHGPFDLKMTHAMFRVFMILLNCHGYVQSEFRDEFPDIKDRSLCGLLSVAGLRGVNVSCNEEFIHLHSQFHNGSFRSQRPIPMVYAEPEMYPPLGYVHLTESWVPRGRLLIDDLPSLMSRVYAESSQAQAGEIYEETFDEDDLFELDGEEGTSTRGLLDLGRRLGGLLLGATKCVKGLHSVIEWPVDVLTKEAEDLGTWLADNKKYVSESTWSCQVCPEVQDALEKSMREQAKLNAQMISGIKKLATTMDSATLKLRDNLKELEQRISVLEQGADDTQQVRITNLENFCEDAAKAFEALRNDIEALKKKPAQSVTPLPSPSGNSGTAGEQRPPPRRRRRPPVVEMSEAQAGETVIVGGDEEQEAHQDSSVAAAGPADEHNAMLQKIYLGSFKWKVSDGGGSILKTFSLPSDIWAANDRMKNFLSYFQYYTCEGMTFTLTITSIGLHGGTLLVAWDALSSATRRGIVSMIQLSNLPSMTLHASGSSIGTLTVTSPAIQHQICTSGSEGSLANLGSLVISVANVLCADSASAQELNVNAWVQFNKPKLSYWTAQHSIAQSGGFEESQDLGDLQAIIATGKWSTTSDKNLMEIIVHPTACYVSEKLIYQTNLSVVAHMFAKWSGSMRYTFVFGASMFDRGKIMVSAVPVQFRNSKLTLSQMAAFPSMVCDLSMETREFTFEVPYISIGKMSLVCKDYLFDISSYNADLVVSRLHVMILDPLVKTGNASNSIGFYVVAGPGKGFKLHQMCGVKSQFAHDVLTAQDFGRSLSCSRLLGNGFKEWCSRESLLMRVPLKSGKKRAFKYAVTPRMRTLPPEATSLSWLSQIFVEWRGSLTYTIHVQSGSAIQHSYMRIWYDPNGKTDEKEVKFLDSAHPPAGIKVYHWDLKIGDSFRFTVPYCARTEKLQIPKAYASTPYEWLTMYNGAVTFDLRSGADMELFVSIAGGDDFEMFEQTVPPKCGSVSDSYTVLSYADDVKSVTEVPNKTTYLADEQPTTSAPRTSIVNTEDDPPTEGEIARTTNGTLVQYRGGAWKPMVERTPTMSKKQVGPELTVSDPQMYKCIKNMNKNVKILTDRQCTAKLANIVDSAQELVGSNSTFVEDLAVGAKQIRKFGESLDVFEGSMSAAKTAELIDNTHAAFSGPADGSPISNVVQLLLPMLSSIKGMSGKMESKMASLTAMFQPCKKAITHLIERSFPYLACKGFKTDKWIWAALASILVGAALLHYYRSDLKFVKKWSVMCMIIWAPLLAEKAYHLGTWIKEKFLKSLPRTRTIKDSCRKHSLAGAFECLASASCAYIKDNWAKTMSSLLTILSVVASLVMWGKIPDDKEITSFADKFHSIGKKGRSITNIIGGFEKITSVCKKWSETLVSWIVSNVSGGIPKEDLAMTAYLGFKIHDWVRETRDMALMENRFRGFGGDEHLVKVRRLYGHSLKIDNALMEKQIVPDMQLSLIIKECRQKCLELMNESYTYKGMKQSRIDPLHVCMLGAPGVGKSTIAHVVINHLLDHRGEPEVDRIYTRSCADAYWSNYHQEPVILYDDLGAIKSNLRLSDYAEIMGIKTNDPFSVPMAAVEDKGKHCTSKYVFSCTNVLNLDDTGDVVTKMAYYRRRNVLVKVERDPDVPKNEANPTEGLVFTVLGHDQNCQGDPQFVVKENWDEPFLREVDTEGWRFERVEYRTFLRFLCMYTDAYMYSQEQVLQGIKTFKMNPFAPEPEFAQAQNGEAAECEIVEEMQEVPGEAPQEAKELVKIETAPNMDELVEAFNKLRVTPGHLNDILRDGSGCYIDEWAIAGPRWLSFHELLPFTCGCHHTRVCDFNIVYNNMCKAVRSQSVHFKYRANQAIKYAYTHKLHSQCRYSIDFEKLRECNPLDVFVCVLSKYTADDHSFERRCPKKMNVVRMQRPPVFELKMRPPSDSVVVEDEQGQRIFEWPHLYIFLRYRAIEFKDDKGSLTVREDAGADVCPWNEFLKLPWLDGDQLKSVLPAHLHRMVQARLEQVEIMEENGNYSGEMRNAIAEIKEYLDQDHQWVAALVLVACAVKERRRMTHDKLHRKSFNALDKLDAWYTTTAPKTSKKMKILLAIGASVAVAGVAVGAVILLQKTNLFGSKEDEEIEGEEGETQASGAHESDGIVTQHLKRDIRPKMRVTYTDHHVAEAHEEKDAEKPRKSGNPTRKSYLGLSPGFAERGMGVTYEEHTPLKDALLDESNKVFRRKIVASVESAVKQGGKASKDTVLSQIGDWQDKVKATGVIAARQLEASGSLKKIHNLNSRRTSSHVMPGLVVHDGAFERSDEVDAELHRITIDEVKSCPKMIKEGVSTLSVKKASVGMLALQKAESQLSFPFTSRAGVDRDLSMTNLIDTHMAGMSCIIISELGNVFRTFGVLRLCGTYVCMPAHYLDEITSEHTLYFVCPSKITQIQLERHRVCLVNGFQETVVWDLGPSVPPSRNYIDFIANADDWKNYKATSGALVMSKYSVDSMLQCVHFLDSIELTEANVSVPTSYYEANGGIHTIISGLRYRVHCMPGFCGRAIMRADATCFRKIIGMHVSGLRNKCMGYAETLTQEHLMQAIETLKETGLLKHIPKGAIGAGEEKLPEHSKKQSLSLEGKGNLGIVGQLTAQLVPTSVTKTTICKSMIHGLIGEIKTEPSVLSAWDRRLPFPPGEWDPMKDAVKKYGSYILPFPTEEIQEVENFLIKKFRRKENSRRTRNVNSLEVGINGIDGSDFWSPIEMKTSPGYPYILKRPSGAQGKKYLFEELEPYPSGRPKYAMKDPELIENYERIKEEVTSGVKPSIMTMECLKDERRKLAKIYEKPATRTFTILSPEVNILFRQYFGDFAAMVMSTRREHFSQVGINPESMEWSDLINSLLRVNTKGFAGDYSKFDGIGSPAIYHSIVNVVNAWYNDGEVNARARHSLISSIVHRDGICGDLILRYSQGMPSGFAMTVIFNSFVNYYFMALAWMSTVGSSLLSPQGSCKDFDTYCKIVAYGDDNVVSVHEEFLDVYNLQTVAAYLSHFGVTYTDGDKNPIHMSKPYEDITKMSFLKRGFERVESSGFLWKAPLDKTSIEERLNWIRDCPTPVEALEQNIESALHEAAIHGRDYFDDLVRRLNSALTRVMLPPTDISFEECQARWWASVTGALRAADYTSLVRRASSGHVEFNKKYRDMFRQQDLPLKEILMKSKPVALLDLEV</sequence>
<organismHost>
    <name type="scientific">Oryza sativa</name>
    <name type="common">Rice</name>
    <dbReference type="NCBI Taxonomy" id="4530"/>
</organismHost>
<organism>
    <name type="scientific">Rice tungro spherical virus (strain A)</name>
    <name type="common">RTSV</name>
    <name type="synonym">Rice tungro spherical waikavirus</name>
    <dbReference type="NCBI Taxonomy" id="337081"/>
    <lineage>
        <taxon>Viruses</taxon>
        <taxon>Riboviria</taxon>
        <taxon>Orthornavirae</taxon>
        <taxon>Pisuviricota</taxon>
        <taxon>Pisoniviricetes</taxon>
        <taxon>Picornavirales</taxon>
        <taxon>Secoviridae</taxon>
        <taxon>Waikavirus</taxon>
        <taxon>Waikavirus oryzae</taxon>
    </lineage>
</organism>
<accession>Q83034</accession>